<accession>P37470</accession>
<dbReference type="EC" id="3.1.1.29" evidence="1"/>
<dbReference type="EMBL" id="D26185">
    <property type="protein sequence ID" value="BAA05288.1"/>
    <property type="molecule type" value="Genomic_DNA"/>
</dbReference>
<dbReference type="EMBL" id="AL009126">
    <property type="protein sequence ID" value="CAB11829.1"/>
    <property type="molecule type" value="Genomic_DNA"/>
</dbReference>
<dbReference type="PIR" id="C69715">
    <property type="entry name" value="C69715"/>
</dbReference>
<dbReference type="RefSeq" id="NP_387934.1">
    <property type="nucleotide sequence ID" value="NC_000964.3"/>
</dbReference>
<dbReference type="RefSeq" id="WP_003226727.1">
    <property type="nucleotide sequence ID" value="NZ_OZ025638.1"/>
</dbReference>
<dbReference type="SMR" id="P37470"/>
<dbReference type="FunCoup" id="P37470">
    <property type="interactions" value="568"/>
</dbReference>
<dbReference type="STRING" id="224308.BSU00530"/>
<dbReference type="PaxDb" id="224308-BSU00530"/>
<dbReference type="EnsemblBacteria" id="CAB11829">
    <property type="protein sequence ID" value="CAB11829"/>
    <property type="gene ID" value="BSU_00530"/>
</dbReference>
<dbReference type="GeneID" id="936740"/>
<dbReference type="KEGG" id="bsu:BSU00530"/>
<dbReference type="PATRIC" id="fig|224308.179.peg.53"/>
<dbReference type="eggNOG" id="COG0193">
    <property type="taxonomic scope" value="Bacteria"/>
</dbReference>
<dbReference type="InParanoid" id="P37470"/>
<dbReference type="OrthoDB" id="9800507at2"/>
<dbReference type="PhylomeDB" id="P37470"/>
<dbReference type="BioCyc" id="BSUB:BSU00530-MONOMER"/>
<dbReference type="Proteomes" id="UP000001570">
    <property type="component" value="Chromosome"/>
</dbReference>
<dbReference type="GO" id="GO:0005737">
    <property type="term" value="C:cytoplasm"/>
    <property type="evidence" value="ECO:0007669"/>
    <property type="project" value="UniProtKB-SubCell"/>
</dbReference>
<dbReference type="GO" id="GO:0004045">
    <property type="term" value="F:peptidyl-tRNA hydrolase activity"/>
    <property type="evidence" value="ECO:0000314"/>
    <property type="project" value="UniProtKB"/>
</dbReference>
<dbReference type="GO" id="GO:0000049">
    <property type="term" value="F:tRNA binding"/>
    <property type="evidence" value="ECO:0007669"/>
    <property type="project" value="UniProtKB-UniRule"/>
</dbReference>
<dbReference type="GO" id="GO:0006515">
    <property type="term" value="P:protein quality control for misfolded or incompletely synthesized proteins"/>
    <property type="evidence" value="ECO:0000314"/>
    <property type="project" value="UniProtKB"/>
</dbReference>
<dbReference type="GO" id="GO:0072344">
    <property type="term" value="P:rescue of stalled ribosome"/>
    <property type="evidence" value="ECO:0000314"/>
    <property type="project" value="UniProtKB"/>
</dbReference>
<dbReference type="CDD" id="cd00462">
    <property type="entry name" value="PTH"/>
    <property type="match status" value="1"/>
</dbReference>
<dbReference type="FunFam" id="3.40.50.1470:FF:000001">
    <property type="entry name" value="Peptidyl-tRNA hydrolase"/>
    <property type="match status" value="1"/>
</dbReference>
<dbReference type="Gene3D" id="3.40.50.1470">
    <property type="entry name" value="Peptidyl-tRNA hydrolase"/>
    <property type="match status" value="1"/>
</dbReference>
<dbReference type="HAMAP" id="MF_00083">
    <property type="entry name" value="Pept_tRNA_hydro_bact"/>
    <property type="match status" value="1"/>
</dbReference>
<dbReference type="InterPro" id="IPR001328">
    <property type="entry name" value="Pept_tRNA_hydro"/>
</dbReference>
<dbReference type="InterPro" id="IPR018171">
    <property type="entry name" value="Pept_tRNA_hydro_CS"/>
</dbReference>
<dbReference type="InterPro" id="IPR036416">
    <property type="entry name" value="Pept_tRNA_hydro_sf"/>
</dbReference>
<dbReference type="NCBIfam" id="TIGR00447">
    <property type="entry name" value="pth"/>
    <property type="match status" value="1"/>
</dbReference>
<dbReference type="PANTHER" id="PTHR17224">
    <property type="entry name" value="PEPTIDYL-TRNA HYDROLASE"/>
    <property type="match status" value="1"/>
</dbReference>
<dbReference type="PANTHER" id="PTHR17224:SF1">
    <property type="entry name" value="PEPTIDYL-TRNA HYDROLASE"/>
    <property type="match status" value="1"/>
</dbReference>
<dbReference type="Pfam" id="PF01195">
    <property type="entry name" value="Pept_tRNA_hydro"/>
    <property type="match status" value="1"/>
</dbReference>
<dbReference type="SUPFAM" id="SSF53178">
    <property type="entry name" value="Peptidyl-tRNA hydrolase-like"/>
    <property type="match status" value="1"/>
</dbReference>
<dbReference type="PROSITE" id="PS01195">
    <property type="entry name" value="PEPT_TRNA_HYDROL_1"/>
    <property type="match status" value="1"/>
</dbReference>
<dbReference type="PROSITE" id="PS01196">
    <property type="entry name" value="PEPT_TRNA_HYDROL_2"/>
    <property type="match status" value="1"/>
</dbReference>
<keyword id="KW-0963">Cytoplasm</keyword>
<keyword id="KW-0378">Hydrolase</keyword>
<keyword id="KW-1185">Reference proteome</keyword>
<keyword id="KW-0694">RNA-binding</keyword>
<keyword id="KW-0820">tRNA-binding</keyword>
<proteinExistence type="inferred from homology"/>
<sequence>MLVIAGLGNPGKNYENTRHNVGFMVIDQLAKEWNIELNQNKFNGLYGTGFVSGKKVLLVKPLTYMNLSGECLRPLMDYYDVDNEDLTVIYDDLDLPTGKIRLRTKGSAGGHNGIKSLIQHLGTSEFDRIRIGIGRPVNGMKVVDYVLGSFTKEEAPEIEEAVDKSVKACEASLSKPFLEVMNEFNAKV</sequence>
<feature type="chain" id="PRO_0000187692" description="Peptidyl-tRNA hydrolase">
    <location>
        <begin position="1"/>
        <end position="188"/>
    </location>
</feature>
<feature type="active site" description="Proton acceptor" evidence="1">
    <location>
        <position position="19"/>
    </location>
</feature>
<feature type="binding site" evidence="1">
    <location>
        <position position="14"/>
    </location>
    <ligand>
        <name>tRNA</name>
        <dbReference type="ChEBI" id="CHEBI:17843"/>
    </ligand>
</feature>
<feature type="binding site" evidence="1">
    <location>
        <position position="64"/>
    </location>
    <ligand>
        <name>tRNA</name>
        <dbReference type="ChEBI" id="CHEBI:17843"/>
    </ligand>
</feature>
<feature type="binding site" evidence="1">
    <location>
        <position position="66"/>
    </location>
    <ligand>
        <name>tRNA</name>
        <dbReference type="ChEBI" id="CHEBI:17843"/>
    </ligand>
</feature>
<feature type="binding site" evidence="1">
    <location>
        <position position="112"/>
    </location>
    <ligand>
        <name>tRNA</name>
        <dbReference type="ChEBI" id="CHEBI:17843"/>
    </ligand>
</feature>
<feature type="site" description="Discriminates between blocked and unblocked aminoacyl-tRNA" evidence="1">
    <location>
        <position position="9"/>
    </location>
</feature>
<feature type="site" description="Stabilizes the basic form of H active site to accept a proton" evidence="1">
    <location>
        <position position="91"/>
    </location>
</feature>
<protein>
    <recommendedName>
        <fullName evidence="1">Peptidyl-tRNA hydrolase</fullName>
        <shortName evidence="1">Pth</shortName>
        <ecNumber evidence="1">3.1.1.29</ecNumber>
    </recommendedName>
    <alternativeName>
        <fullName evidence="5">Stage V sporulation protein C</fullName>
    </alternativeName>
</protein>
<evidence type="ECO:0000255" key="1">
    <source>
        <dbReference type="HAMAP-Rule" id="MF_00083"/>
    </source>
</evidence>
<evidence type="ECO:0000269" key="2">
    <source>
    </source>
</evidence>
<evidence type="ECO:0000269" key="3">
    <source>
    </source>
</evidence>
<evidence type="ECO:0000303" key="4">
    <source>
    </source>
</evidence>
<evidence type="ECO:0000303" key="5">
    <source>
    </source>
</evidence>
<evidence type="ECO:0000303" key="6">
    <source>
    </source>
</evidence>
<evidence type="ECO:0000305" key="7">
    <source>
    </source>
</evidence>
<evidence type="ECO:0000312" key="8">
    <source>
        <dbReference type="EMBL" id="BAA05288.1"/>
    </source>
</evidence>
<reference key="1">
    <citation type="journal article" date="1994" name="DNA Res.">
        <title>Systematic sequencing of the 180 kilobase region of the Bacillus subtilis chromosome containing the replication origin.</title>
        <authorList>
            <person name="Ogasawara N."/>
            <person name="Nakai S."/>
            <person name="Yoshikawa H."/>
        </authorList>
    </citation>
    <scope>NUCLEOTIDE SEQUENCE [GENOMIC DNA]</scope>
    <source>
        <strain>168</strain>
    </source>
</reference>
<reference key="2">
    <citation type="journal article" date="1997" name="Nature">
        <title>The complete genome sequence of the Gram-positive bacterium Bacillus subtilis.</title>
        <authorList>
            <person name="Kunst F."/>
            <person name="Ogasawara N."/>
            <person name="Moszer I."/>
            <person name="Albertini A.M."/>
            <person name="Alloni G."/>
            <person name="Azevedo V."/>
            <person name="Bertero M.G."/>
            <person name="Bessieres P."/>
            <person name="Bolotin A."/>
            <person name="Borchert S."/>
            <person name="Borriss R."/>
            <person name="Boursier L."/>
            <person name="Brans A."/>
            <person name="Braun M."/>
            <person name="Brignell S.C."/>
            <person name="Bron S."/>
            <person name="Brouillet S."/>
            <person name="Bruschi C.V."/>
            <person name="Caldwell B."/>
            <person name="Capuano V."/>
            <person name="Carter N.M."/>
            <person name="Choi S.-K."/>
            <person name="Codani J.-J."/>
            <person name="Connerton I.F."/>
            <person name="Cummings N.J."/>
            <person name="Daniel R.A."/>
            <person name="Denizot F."/>
            <person name="Devine K.M."/>
            <person name="Duesterhoeft A."/>
            <person name="Ehrlich S.D."/>
            <person name="Emmerson P.T."/>
            <person name="Entian K.-D."/>
            <person name="Errington J."/>
            <person name="Fabret C."/>
            <person name="Ferrari E."/>
            <person name="Foulger D."/>
            <person name="Fritz C."/>
            <person name="Fujita M."/>
            <person name="Fujita Y."/>
            <person name="Fuma S."/>
            <person name="Galizzi A."/>
            <person name="Galleron N."/>
            <person name="Ghim S.-Y."/>
            <person name="Glaser P."/>
            <person name="Goffeau A."/>
            <person name="Golightly E.J."/>
            <person name="Grandi G."/>
            <person name="Guiseppi G."/>
            <person name="Guy B.J."/>
            <person name="Haga K."/>
            <person name="Haiech J."/>
            <person name="Harwood C.R."/>
            <person name="Henaut A."/>
            <person name="Hilbert H."/>
            <person name="Holsappel S."/>
            <person name="Hosono S."/>
            <person name="Hullo M.-F."/>
            <person name="Itaya M."/>
            <person name="Jones L.-M."/>
            <person name="Joris B."/>
            <person name="Karamata D."/>
            <person name="Kasahara Y."/>
            <person name="Klaerr-Blanchard M."/>
            <person name="Klein C."/>
            <person name="Kobayashi Y."/>
            <person name="Koetter P."/>
            <person name="Koningstein G."/>
            <person name="Krogh S."/>
            <person name="Kumano M."/>
            <person name="Kurita K."/>
            <person name="Lapidus A."/>
            <person name="Lardinois S."/>
            <person name="Lauber J."/>
            <person name="Lazarevic V."/>
            <person name="Lee S.-M."/>
            <person name="Levine A."/>
            <person name="Liu H."/>
            <person name="Masuda S."/>
            <person name="Mauel C."/>
            <person name="Medigue C."/>
            <person name="Medina N."/>
            <person name="Mellado R.P."/>
            <person name="Mizuno M."/>
            <person name="Moestl D."/>
            <person name="Nakai S."/>
            <person name="Noback M."/>
            <person name="Noone D."/>
            <person name="O'Reilly M."/>
            <person name="Ogawa K."/>
            <person name="Ogiwara A."/>
            <person name="Oudega B."/>
            <person name="Park S.-H."/>
            <person name="Parro V."/>
            <person name="Pohl T.M."/>
            <person name="Portetelle D."/>
            <person name="Porwollik S."/>
            <person name="Prescott A.M."/>
            <person name="Presecan E."/>
            <person name="Pujic P."/>
            <person name="Purnelle B."/>
            <person name="Rapoport G."/>
            <person name="Rey M."/>
            <person name="Reynolds S."/>
            <person name="Rieger M."/>
            <person name="Rivolta C."/>
            <person name="Rocha E."/>
            <person name="Roche B."/>
            <person name="Rose M."/>
            <person name="Sadaie Y."/>
            <person name="Sato T."/>
            <person name="Scanlan E."/>
            <person name="Schleich S."/>
            <person name="Schroeter R."/>
            <person name="Scoffone F."/>
            <person name="Sekiguchi J."/>
            <person name="Sekowska A."/>
            <person name="Seror S.J."/>
            <person name="Serror P."/>
            <person name="Shin B.-S."/>
            <person name="Soldo B."/>
            <person name="Sorokin A."/>
            <person name="Tacconi E."/>
            <person name="Takagi T."/>
            <person name="Takahashi H."/>
            <person name="Takemaru K."/>
            <person name="Takeuchi M."/>
            <person name="Tamakoshi A."/>
            <person name="Tanaka T."/>
            <person name="Terpstra P."/>
            <person name="Tognoni A."/>
            <person name="Tosato V."/>
            <person name="Uchiyama S."/>
            <person name="Vandenbol M."/>
            <person name="Vannier F."/>
            <person name="Vassarotti A."/>
            <person name="Viari A."/>
            <person name="Wambutt R."/>
            <person name="Wedler E."/>
            <person name="Wedler H."/>
            <person name="Weitzenegger T."/>
            <person name="Winters P."/>
            <person name="Wipat A."/>
            <person name="Yamamoto H."/>
            <person name="Yamane K."/>
            <person name="Yasumoto K."/>
            <person name="Yata K."/>
            <person name="Yoshida K."/>
            <person name="Yoshikawa H.-F."/>
            <person name="Zumstein E."/>
            <person name="Yoshikawa H."/>
            <person name="Danchin A."/>
        </authorList>
    </citation>
    <scope>NUCLEOTIDE SEQUENCE [LARGE SCALE GENOMIC DNA]</scope>
    <source>
        <strain>168</strain>
    </source>
</reference>
<reference key="3">
    <citation type="journal article" date="2002" name="Mol. Microbiol.">
        <title>Peptidyl-tRNA hydrolase in Bacillus subtilis, encoded by spoVC, is essential to vegetative growth, whereas the homologous enzyme in Saccharomyces cerevisiae is dispensable.</title>
        <authorList>
            <person name="Menez J."/>
            <person name="Buckingham R.H."/>
            <person name="de Zamaroczy M."/>
            <person name="Campelli C.K."/>
        </authorList>
    </citation>
    <scope>FUNCTION</scope>
    <scope>DISRUPTION PHENOTYPE</scope>
</reference>
<reference key="4">
    <citation type="journal article" date="2024" name="Mol. Cell">
        <title>Peptidyl-tRNA hydrolase is the nascent chain release factor in bacterial ribosome-associated quality control.</title>
        <authorList>
            <person name="Svetlov M.S."/>
            <person name="Dunand C.F."/>
            <person name="Nakamoto J.A."/>
            <person name="Atkinson G.C."/>
            <person name="Safdari H.A."/>
            <person name="Wilson D.N."/>
            <person name="Vazquez-Laslop N."/>
            <person name="Mankin A.S."/>
        </authorList>
    </citation>
    <scope>FUNCTION</scope>
    <scope>DISRUPTION PHENOTYPE</scope>
    <source>
        <strain>168</strain>
    </source>
</reference>
<gene>
    <name evidence="1 4" type="primary">pth</name>
    <name evidence="6" type="synonym">pthA</name>
    <name evidence="5 8" type="synonym">spoVC</name>
    <name type="ordered locus">BSU00530</name>
</gene>
<name>PTH_BACSU</name>
<comment type="function">
    <text evidence="1 7">Hydrolyzes ribosome-free peptidyl-tRNAs (with 1 or more amino acids incorporated), which drop off the ribosome during protein synthesis, or as a result of ribosome stalling (PubMed:12100553).</text>
</comment>
<comment type="function">
    <text evidence="2 3">Catalyzes the release of premature peptidyl moieties from peptidyl-tRNA molecules trapped in stalled 50S ribosomal subunits, and thus maintains levels of free tRNAs and 50S ribosomes (PubMed:38183984). Releases Ala-tailed nascent peptides from stalled 50S ribosomal subunits (PubMed:38183984). Non-templated Ala tailing occurs as part of the ribosome quality control (RQC) pathway. In the absence of Ala tails significantly less peptide release occurs (PubMed:38183984). The Ala tail facilitates the interaction of Pth with the nascent peptide-tRNA ester bond as well as promoting nascent chain degradation; 3 Ala residues suffice to stimulate peptide release from stalled 50S ribosomal subunits (PubMed:38183984). Complements a temperature-sensitive pth mutation in E.coli (PubMed:12100553).</text>
</comment>
<comment type="catalytic activity">
    <reaction evidence="1 7">
        <text>an N-acyl-L-alpha-aminoacyl-tRNA + H2O = an N-acyl-L-amino acid + a tRNA + H(+)</text>
        <dbReference type="Rhea" id="RHEA:54448"/>
        <dbReference type="Rhea" id="RHEA-COMP:10123"/>
        <dbReference type="Rhea" id="RHEA-COMP:13883"/>
        <dbReference type="ChEBI" id="CHEBI:15377"/>
        <dbReference type="ChEBI" id="CHEBI:15378"/>
        <dbReference type="ChEBI" id="CHEBI:59874"/>
        <dbReference type="ChEBI" id="CHEBI:78442"/>
        <dbReference type="ChEBI" id="CHEBI:138191"/>
        <dbReference type="EC" id="3.1.1.29"/>
    </reaction>
</comment>
<comment type="subunit">
    <text evidence="1">Monomer.</text>
</comment>
<comment type="subcellular location">
    <subcellularLocation>
        <location evidence="1">Cytoplasm</location>
    </subcellularLocation>
</comment>
<comment type="disruption phenotype">
    <text evidence="2 3">Cells no longer grow vegetatively, but are able to sporulate (PubMed:12100553). In depletion studies cells are more sensitive tetracycline; a depletion mutant with an rqcH deletion is hypersensitive to tetracycline, suggesting this enzyme functions in the RQC pathway (PubMed:38183984).</text>
</comment>
<comment type="similarity">
    <text evidence="1">Belongs to the PTH family.</text>
</comment>
<organism>
    <name type="scientific">Bacillus subtilis (strain 168)</name>
    <dbReference type="NCBI Taxonomy" id="224308"/>
    <lineage>
        <taxon>Bacteria</taxon>
        <taxon>Bacillati</taxon>
        <taxon>Bacillota</taxon>
        <taxon>Bacilli</taxon>
        <taxon>Bacillales</taxon>
        <taxon>Bacillaceae</taxon>
        <taxon>Bacillus</taxon>
    </lineage>
</organism>